<sequence length="474" mass="55043">MMKLKKFQLHTPFAHSCNRVEIYTARFGPTPFSTKANNLKQPESTLNDHRTIAARQKLYTTSILTPGSIFFLPHGTRIYNRLVDFLRAQYQIHGFEEIITPLIFKKDLWEKSGHWQNYEKEIFRVEESRNVEDEHSNATYGLKPMNCPGHCIVYASTERSYKELPLRFADFSPLHRNEASGALSGLTRLRCFHQDDGHIFCSPESIKDEIKNTLTFVKQVYSLLGMNKLKLYLSTRPEEHIGSLDTWNEAENGLREALQESGETWIINEGDGAFYGPKIDVMVADARGKWHQTATIQLDFNLPQRFKLYYRTDAGDNAGSEKLIKQPVMIHRAIFGSLERFMGILIEHLNGHWPFWLSPRHAVILPVNQTDRILTYAKQVQKELSNQEVNESEFLPLNKNTYYVDINAEAQSIGKRLRESRLLNYNYEIVIGEDEVDKEILSVSSRHNHNSRDTRKMTIQQLKKEFIENVKAYR</sequence>
<keyword id="KW-0030">Aminoacyl-tRNA synthetase</keyword>
<keyword id="KW-0067">ATP-binding</keyword>
<keyword id="KW-0436">Ligase</keyword>
<keyword id="KW-0496">Mitochondrion</keyword>
<keyword id="KW-0547">Nucleotide-binding</keyword>
<keyword id="KW-0648">Protein biosynthesis</keyword>
<keyword id="KW-1185">Reference proteome</keyword>
<keyword id="KW-0809">Transit peptide</keyword>
<protein>
    <recommendedName>
        <fullName>Probable threonine--tRNA ligase, mitochondrial</fullName>
        <ecNumber>6.1.1.3</ecNumber>
    </recommendedName>
    <alternativeName>
        <fullName>Threonyl-tRNA synthetase</fullName>
        <shortName>ThrRS</shortName>
    </alternativeName>
</protein>
<organism>
    <name type="scientific">Schizosaccharomyces pombe (strain 972 / ATCC 24843)</name>
    <name type="common">Fission yeast</name>
    <dbReference type="NCBI Taxonomy" id="284812"/>
    <lineage>
        <taxon>Eukaryota</taxon>
        <taxon>Fungi</taxon>
        <taxon>Dikarya</taxon>
        <taxon>Ascomycota</taxon>
        <taxon>Taphrinomycotina</taxon>
        <taxon>Schizosaccharomycetes</taxon>
        <taxon>Schizosaccharomycetales</taxon>
        <taxon>Schizosaccharomycetaceae</taxon>
        <taxon>Schizosaccharomyces</taxon>
    </lineage>
</organism>
<gene>
    <name type="ORF">SPAC24C9.09</name>
</gene>
<proteinExistence type="inferred from homology"/>
<comment type="catalytic activity">
    <reaction>
        <text>tRNA(Thr) + L-threonine + ATP = L-threonyl-tRNA(Thr) + AMP + diphosphate + H(+)</text>
        <dbReference type="Rhea" id="RHEA:24624"/>
        <dbReference type="Rhea" id="RHEA-COMP:9670"/>
        <dbReference type="Rhea" id="RHEA-COMP:9704"/>
        <dbReference type="ChEBI" id="CHEBI:15378"/>
        <dbReference type="ChEBI" id="CHEBI:30616"/>
        <dbReference type="ChEBI" id="CHEBI:33019"/>
        <dbReference type="ChEBI" id="CHEBI:57926"/>
        <dbReference type="ChEBI" id="CHEBI:78442"/>
        <dbReference type="ChEBI" id="CHEBI:78534"/>
        <dbReference type="ChEBI" id="CHEBI:456215"/>
        <dbReference type="EC" id="6.1.1.3"/>
    </reaction>
</comment>
<comment type="subcellular location">
    <subcellularLocation>
        <location evidence="1">Mitochondrion matrix</location>
    </subcellularLocation>
</comment>
<comment type="similarity">
    <text evidence="3">Belongs to the class-II aminoacyl-tRNA synthetase family.</text>
</comment>
<dbReference type="EC" id="6.1.1.3"/>
<dbReference type="EMBL" id="CU329670">
    <property type="protein sequence ID" value="CAB11266.2"/>
    <property type="molecule type" value="Genomic_DNA"/>
</dbReference>
<dbReference type="PIR" id="T38350">
    <property type="entry name" value="T38350"/>
</dbReference>
<dbReference type="RefSeq" id="NP_594034.2">
    <property type="nucleotide sequence ID" value="NM_001019459.2"/>
</dbReference>
<dbReference type="SMR" id="O13969"/>
<dbReference type="FunCoup" id="O13969">
    <property type="interactions" value="41"/>
</dbReference>
<dbReference type="STRING" id="284812.O13969"/>
<dbReference type="iPTMnet" id="O13969"/>
<dbReference type="PaxDb" id="4896-SPAC24C9.09.1"/>
<dbReference type="EnsemblFungi" id="SPAC24C9.09.1">
    <property type="protein sequence ID" value="SPAC24C9.09.1:pep"/>
    <property type="gene ID" value="SPAC24C9.09"/>
</dbReference>
<dbReference type="KEGG" id="spo:2541554"/>
<dbReference type="PomBase" id="SPAC24C9.09"/>
<dbReference type="VEuPathDB" id="FungiDB:SPAC24C9.09"/>
<dbReference type="eggNOG" id="KOG1637">
    <property type="taxonomic scope" value="Eukaryota"/>
</dbReference>
<dbReference type="HOGENOM" id="CLU_008554_2_1_1"/>
<dbReference type="InParanoid" id="O13969"/>
<dbReference type="OMA" id="HRYEYSG"/>
<dbReference type="PRO" id="PR:O13969"/>
<dbReference type="Proteomes" id="UP000002485">
    <property type="component" value="Chromosome I"/>
</dbReference>
<dbReference type="GO" id="GO:0005759">
    <property type="term" value="C:mitochondrial matrix"/>
    <property type="evidence" value="ECO:0000305"/>
    <property type="project" value="PomBase"/>
</dbReference>
<dbReference type="GO" id="GO:0005739">
    <property type="term" value="C:mitochondrion"/>
    <property type="evidence" value="ECO:0007005"/>
    <property type="project" value="PomBase"/>
</dbReference>
<dbReference type="GO" id="GO:0005524">
    <property type="term" value="F:ATP binding"/>
    <property type="evidence" value="ECO:0000255"/>
    <property type="project" value="PomBase"/>
</dbReference>
<dbReference type="GO" id="GO:0004829">
    <property type="term" value="F:threonine-tRNA ligase activity"/>
    <property type="evidence" value="ECO:0000318"/>
    <property type="project" value="GO_Central"/>
</dbReference>
<dbReference type="GO" id="GO:0032543">
    <property type="term" value="P:mitochondrial translation"/>
    <property type="evidence" value="ECO:0000303"/>
    <property type="project" value="PomBase"/>
</dbReference>
<dbReference type="GO" id="GO:0006435">
    <property type="term" value="P:threonyl-tRNA aminoacylation"/>
    <property type="evidence" value="ECO:0000318"/>
    <property type="project" value="GO_Central"/>
</dbReference>
<dbReference type="CDD" id="cd00771">
    <property type="entry name" value="ThrRS_core"/>
    <property type="match status" value="1"/>
</dbReference>
<dbReference type="FunFam" id="3.40.50.800:FF:000023">
    <property type="entry name" value="Threonyl-tRNA synthetase mitochondrial"/>
    <property type="match status" value="1"/>
</dbReference>
<dbReference type="FunFam" id="3.30.930.10:FF:000039">
    <property type="entry name" value="Threonyl-tRNA synthetase, mitochondrial"/>
    <property type="match status" value="1"/>
</dbReference>
<dbReference type="Gene3D" id="3.40.50.800">
    <property type="entry name" value="Anticodon-binding domain"/>
    <property type="match status" value="1"/>
</dbReference>
<dbReference type="Gene3D" id="3.30.930.10">
    <property type="entry name" value="Bira Bifunctional Protein, Domain 2"/>
    <property type="match status" value="1"/>
</dbReference>
<dbReference type="InterPro" id="IPR002314">
    <property type="entry name" value="aa-tRNA-synt_IIb"/>
</dbReference>
<dbReference type="InterPro" id="IPR006195">
    <property type="entry name" value="aa-tRNA-synth_II"/>
</dbReference>
<dbReference type="InterPro" id="IPR045864">
    <property type="entry name" value="aa-tRNA-synth_II/BPL/LPL"/>
</dbReference>
<dbReference type="InterPro" id="IPR004154">
    <property type="entry name" value="Anticodon-bd"/>
</dbReference>
<dbReference type="InterPro" id="IPR036621">
    <property type="entry name" value="Anticodon-bd_dom_sf"/>
</dbReference>
<dbReference type="InterPro" id="IPR002320">
    <property type="entry name" value="Thr-tRNA-ligase_IIa"/>
</dbReference>
<dbReference type="InterPro" id="IPR033728">
    <property type="entry name" value="ThrRS_core"/>
</dbReference>
<dbReference type="NCBIfam" id="TIGR00418">
    <property type="entry name" value="thrS"/>
    <property type="match status" value="1"/>
</dbReference>
<dbReference type="PANTHER" id="PTHR11451:SF50">
    <property type="entry name" value="THREONINE--TRNA LIGASE, MITOCHONDRIAL"/>
    <property type="match status" value="1"/>
</dbReference>
<dbReference type="PANTHER" id="PTHR11451">
    <property type="entry name" value="THREONINE-TRNA LIGASE"/>
    <property type="match status" value="1"/>
</dbReference>
<dbReference type="Pfam" id="PF03129">
    <property type="entry name" value="HGTP_anticodon"/>
    <property type="match status" value="1"/>
</dbReference>
<dbReference type="Pfam" id="PF00587">
    <property type="entry name" value="tRNA-synt_2b"/>
    <property type="match status" value="1"/>
</dbReference>
<dbReference type="PRINTS" id="PR01047">
    <property type="entry name" value="TRNASYNTHTHR"/>
</dbReference>
<dbReference type="SUPFAM" id="SSF52954">
    <property type="entry name" value="Class II aaRS ABD-related"/>
    <property type="match status" value="1"/>
</dbReference>
<dbReference type="SUPFAM" id="SSF55681">
    <property type="entry name" value="Class II aaRS and biotin synthetases"/>
    <property type="match status" value="1"/>
</dbReference>
<dbReference type="PROSITE" id="PS50862">
    <property type="entry name" value="AA_TRNA_LIGASE_II"/>
    <property type="match status" value="1"/>
</dbReference>
<feature type="transit peptide" description="Mitochondrion" evidence="2">
    <location>
        <begin position="1"/>
        <end position="27"/>
    </location>
</feature>
<feature type="chain" id="PRO_0000035826" description="Probable threonine--tRNA ligase, mitochondrial">
    <location>
        <begin position="28"/>
        <end position="474"/>
    </location>
</feature>
<name>SYTM_SCHPO</name>
<reference key="1">
    <citation type="journal article" date="2002" name="Nature">
        <title>The genome sequence of Schizosaccharomyces pombe.</title>
        <authorList>
            <person name="Wood V."/>
            <person name="Gwilliam R."/>
            <person name="Rajandream M.A."/>
            <person name="Lyne M.H."/>
            <person name="Lyne R."/>
            <person name="Stewart A."/>
            <person name="Sgouros J.G."/>
            <person name="Peat N."/>
            <person name="Hayles J."/>
            <person name="Baker S.G."/>
            <person name="Basham D."/>
            <person name="Bowman S."/>
            <person name="Brooks K."/>
            <person name="Brown D."/>
            <person name="Brown S."/>
            <person name="Chillingworth T."/>
            <person name="Churcher C.M."/>
            <person name="Collins M."/>
            <person name="Connor R."/>
            <person name="Cronin A."/>
            <person name="Davis P."/>
            <person name="Feltwell T."/>
            <person name="Fraser A."/>
            <person name="Gentles S."/>
            <person name="Goble A."/>
            <person name="Hamlin N."/>
            <person name="Harris D.E."/>
            <person name="Hidalgo J."/>
            <person name="Hodgson G."/>
            <person name="Holroyd S."/>
            <person name="Hornsby T."/>
            <person name="Howarth S."/>
            <person name="Huckle E.J."/>
            <person name="Hunt S."/>
            <person name="Jagels K."/>
            <person name="James K.D."/>
            <person name="Jones L."/>
            <person name="Jones M."/>
            <person name="Leather S."/>
            <person name="McDonald S."/>
            <person name="McLean J."/>
            <person name="Mooney P."/>
            <person name="Moule S."/>
            <person name="Mungall K.L."/>
            <person name="Murphy L.D."/>
            <person name="Niblett D."/>
            <person name="Odell C."/>
            <person name="Oliver K."/>
            <person name="O'Neil S."/>
            <person name="Pearson D."/>
            <person name="Quail M.A."/>
            <person name="Rabbinowitsch E."/>
            <person name="Rutherford K.M."/>
            <person name="Rutter S."/>
            <person name="Saunders D."/>
            <person name="Seeger K."/>
            <person name="Sharp S."/>
            <person name="Skelton J."/>
            <person name="Simmonds M.N."/>
            <person name="Squares R."/>
            <person name="Squares S."/>
            <person name="Stevens K."/>
            <person name="Taylor K."/>
            <person name="Taylor R.G."/>
            <person name="Tivey A."/>
            <person name="Walsh S.V."/>
            <person name="Warren T."/>
            <person name="Whitehead S."/>
            <person name="Woodward J.R."/>
            <person name="Volckaert G."/>
            <person name="Aert R."/>
            <person name="Robben J."/>
            <person name="Grymonprez B."/>
            <person name="Weltjens I."/>
            <person name="Vanstreels E."/>
            <person name="Rieger M."/>
            <person name="Schaefer M."/>
            <person name="Mueller-Auer S."/>
            <person name="Gabel C."/>
            <person name="Fuchs M."/>
            <person name="Duesterhoeft A."/>
            <person name="Fritzc C."/>
            <person name="Holzer E."/>
            <person name="Moestl D."/>
            <person name="Hilbert H."/>
            <person name="Borzym K."/>
            <person name="Langer I."/>
            <person name="Beck A."/>
            <person name="Lehrach H."/>
            <person name="Reinhardt R."/>
            <person name="Pohl T.M."/>
            <person name="Eger P."/>
            <person name="Zimmermann W."/>
            <person name="Wedler H."/>
            <person name="Wambutt R."/>
            <person name="Purnelle B."/>
            <person name="Goffeau A."/>
            <person name="Cadieu E."/>
            <person name="Dreano S."/>
            <person name="Gloux S."/>
            <person name="Lelaure V."/>
            <person name="Mottier S."/>
            <person name="Galibert F."/>
            <person name="Aves S.J."/>
            <person name="Xiang Z."/>
            <person name="Hunt C."/>
            <person name="Moore K."/>
            <person name="Hurst S.M."/>
            <person name="Lucas M."/>
            <person name="Rochet M."/>
            <person name="Gaillardin C."/>
            <person name="Tallada V.A."/>
            <person name="Garzon A."/>
            <person name="Thode G."/>
            <person name="Daga R.R."/>
            <person name="Cruzado L."/>
            <person name="Jimenez J."/>
            <person name="Sanchez M."/>
            <person name="del Rey F."/>
            <person name="Benito J."/>
            <person name="Dominguez A."/>
            <person name="Revuelta J.L."/>
            <person name="Moreno S."/>
            <person name="Armstrong J."/>
            <person name="Forsburg S.L."/>
            <person name="Cerutti L."/>
            <person name="Lowe T."/>
            <person name="McCombie W.R."/>
            <person name="Paulsen I."/>
            <person name="Potashkin J."/>
            <person name="Shpakovski G.V."/>
            <person name="Ussery D."/>
            <person name="Barrell B.G."/>
            <person name="Nurse P."/>
        </authorList>
    </citation>
    <scope>NUCLEOTIDE SEQUENCE [LARGE SCALE GENOMIC DNA]</scope>
    <source>
        <strain>972 / ATCC 24843</strain>
    </source>
</reference>
<reference key="2">
    <citation type="journal article" date="2011" name="Science">
        <title>Comparative functional genomics of the fission yeasts.</title>
        <authorList>
            <person name="Rhind N."/>
            <person name="Chen Z."/>
            <person name="Yassour M."/>
            <person name="Thompson D.A."/>
            <person name="Haas B.J."/>
            <person name="Habib N."/>
            <person name="Wapinski I."/>
            <person name="Roy S."/>
            <person name="Lin M.F."/>
            <person name="Heiman D.I."/>
            <person name="Young S.K."/>
            <person name="Furuya K."/>
            <person name="Guo Y."/>
            <person name="Pidoux A."/>
            <person name="Chen H.M."/>
            <person name="Robbertse B."/>
            <person name="Goldberg J.M."/>
            <person name="Aoki K."/>
            <person name="Bayne E.H."/>
            <person name="Berlin A.M."/>
            <person name="Desjardins C.A."/>
            <person name="Dobbs E."/>
            <person name="Dukaj L."/>
            <person name="Fan L."/>
            <person name="FitzGerald M.G."/>
            <person name="French C."/>
            <person name="Gujja S."/>
            <person name="Hansen K."/>
            <person name="Keifenheim D."/>
            <person name="Levin J.Z."/>
            <person name="Mosher R.A."/>
            <person name="Mueller C.A."/>
            <person name="Pfiffner J."/>
            <person name="Priest M."/>
            <person name="Russ C."/>
            <person name="Smialowska A."/>
            <person name="Swoboda P."/>
            <person name="Sykes S.M."/>
            <person name="Vaughn M."/>
            <person name="Vengrova S."/>
            <person name="Yoder R."/>
            <person name="Zeng Q."/>
            <person name="Allshire R."/>
            <person name="Baulcombe D."/>
            <person name="Birren B.W."/>
            <person name="Brown W."/>
            <person name="Ekwall K."/>
            <person name="Kellis M."/>
            <person name="Leatherwood J."/>
            <person name="Levin H."/>
            <person name="Margalit H."/>
            <person name="Martienssen R."/>
            <person name="Nieduszynski C.A."/>
            <person name="Spatafora J.W."/>
            <person name="Friedman N."/>
            <person name="Dalgaard J.Z."/>
            <person name="Baumann P."/>
            <person name="Niki H."/>
            <person name="Regev A."/>
            <person name="Nusbaum C."/>
        </authorList>
    </citation>
    <scope>REVISION OF GENE MODEL</scope>
</reference>
<reference key="3">
    <citation type="journal article" date="2006" name="Nat. Biotechnol.">
        <title>ORFeome cloning and global analysis of protein localization in the fission yeast Schizosaccharomyces pombe.</title>
        <authorList>
            <person name="Matsuyama A."/>
            <person name="Arai R."/>
            <person name="Yashiroda Y."/>
            <person name="Shirai A."/>
            <person name="Kamata A."/>
            <person name="Sekido S."/>
            <person name="Kobayashi Y."/>
            <person name="Hashimoto A."/>
            <person name="Hamamoto M."/>
            <person name="Hiraoka Y."/>
            <person name="Horinouchi S."/>
            <person name="Yoshida M."/>
        </authorList>
    </citation>
    <scope>SUBCELLULAR LOCATION [LARGE SCALE ANALYSIS]</scope>
</reference>
<evidence type="ECO:0000250" key="1"/>
<evidence type="ECO:0000255" key="2"/>
<evidence type="ECO:0000305" key="3"/>
<accession>O13969</accession>